<proteinExistence type="evidence at protein level"/>
<protein>
    <recommendedName>
        <fullName>Reaction center protein L chain</fullName>
    </recommendedName>
    <alternativeName>
        <fullName>Photosynthetic reaction center L subunit</fullName>
    </alternativeName>
</protein>
<evidence type="ECO:0000250" key="1"/>
<evidence type="ECO:0000255" key="2"/>
<evidence type="ECO:0000305" key="3"/>
<evidence type="ECO:0007829" key="4">
    <source>
        <dbReference type="PDB" id="8WDU"/>
    </source>
</evidence>
<evidence type="ECO:0007829" key="5">
    <source>
        <dbReference type="PDB" id="8WDV"/>
    </source>
</evidence>
<sequence>MAMLSFERKYRVRGGTLIGGDLFDFWVGPFYVGFFGVAGFFFALLGVLLIVWGATIGPNAELQTYNIWQISIAPPDLSYGLGMAPMTEGGLWQIITICAIGAFVSWALREVEICRKLGIGFHIPFAFAFAIGAYLVLVVVRPILMGAWGHGFPYGILSHLDWVSNVGYQFLHFHYNPAHMLAITFFFTNCLALSMHGSLILSVTNPQKGEEVKTSEHENTFFRDIVGYSIGALAIHRLGLFLALSAVFWSAVCIVISGPFWTRGWPEWWNWWLELPLW</sequence>
<comment type="function">
    <text>The reaction center is a membrane-bound complex that mediates the initial photochemical event in the electron transfer process of photosynthesis.</text>
</comment>
<comment type="subunit">
    <text>Reaction center is composed of four bacteriochlorophylls, two bacteriopheophytins, two ubiquinones, one iron, and two highly hydrophobic polypeptide chains (designated L and M).</text>
</comment>
<comment type="subcellular location">
    <subcellularLocation>
        <location evidence="1">Cellular chromatophore membrane</location>
        <topology evidence="1">Multi-pass membrane protein</topology>
    </subcellularLocation>
</comment>
<comment type="similarity">
    <text evidence="3">Belongs to the reaction center PufL/M/PsbA/D family.</text>
</comment>
<keyword id="KW-0002">3D-structure</keyword>
<keyword id="KW-0076">Bacteriochlorophyll</keyword>
<keyword id="KW-0148">Chlorophyll</keyword>
<keyword id="KW-0157">Chromophore</keyword>
<keyword id="KW-0249">Electron transport</keyword>
<keyword id="KW-0408">Iron</keyword>
<keyword id="KW-0460">Magnesium</keyword>
<keyword id="KW-0472">Membrane</keyword>
<keyword id="KW-0479">Metal-binding</keyword>
<keyword id="KW-0602">Photosynthesis</keyword>
<keyword id="KW-0674">Reaction center</keyword>
<keyword id="KW-1185">Reference proteome</keyword>
<keyword id="KW-0812">Transmembrane</keyword>
<keyword id="KW-1133">Transmembrane helix</keyword>
<keyword id="KW-0813">Transport</keyword>
<organism>
    <name type="scientific">Allochromatium vinosum (strain ATCC 17899 / DSM 180 / NBRC 103801 / NCIMB 10441 / D)</name>
    <name type="common">Chromatium vinosum</name>
    <dbReference type="NCBI Taxonomy" id="572477"/>
    <lineage>
        <taxon>Bacteria</taxon>
        <taxon>Pseudomonadati</taxon>
        <taxon>Pseudomonadota</taxon>
        <taxon>Gammaproteobacteria</taxon>
        <taxon>Chromatiales</taxon>
        <taxon>Chromatiaceae</taxon>
        <taxon>Allochromatium</taxon>
    </lineage>
</organism>
<accession>P51762</accession>
<accession>D3RP73</accession>
<accession>O82945</accession>
<dbReference type="EMBL" id="AB011811">
    <property type="protein sequence ID" value="BAA32740.1"/>
    <property type="molecule type" value="Genomic_DNA"/>
</dbReference>
<dbReference type="EMBL" id="CP001896">
    <property type="protein sequence ID" value="ADC63463.1"/>
    <property type="molecule type" value="Genomic_DNA"/>
</dbReference>
<dbReference type="EMBL" id="D50647">
    <property type="protein sequence ID" value="BAA09314.1"/>
    <property type="molecule type" value="Genomic_DNA"/>
</dbReference>
<dbReference type="RefSeq" id="WP_012971732.1">
    <property type="nucleotide sequence ID" value="NC_013851.1"/>
</dbReference>
<dbReference type="PDB" id="8WDU">
    <property type="method" value="EM"/>
    <property type="resolution" value="2.24 A"/>
    <property type="chains" value="L=1-278"/>
</dbReference>
<dbReference type="PDB" id="8WDV">
    <property type="method" value="EM"/>
    <property type="resolution" value="2.24 A"/>
    <property type="chains" value="L=1-278"/>
</dbReference>
<dbReference type="PDBsum" id="8WDU"/>
<dbReference type="PDBsum" id="8WDV"/>
<dbReference type="EMDB" id="EMD-37465"/>
<dbReference type="EMDB" id="EMD-37466"/>
<dbReference type="SMR" id="P51762"/>
<dbReference type="STRING" id="572477.Alvin_2553"/>
<dbReference type="KEGG" id="alv:Alvin_2553"/>
<dbReference type="eggNOG" id="ENOG502Z7K3">
    <property type="taxonomic scope" value="Bacteria"/>
</dbReference>
<dbReference type="HOGENOM" id="CLU_078782_0_0_6"/>
<dbReference type="OrthoDB" id="8555181at2"/>
<dbReference type="Proteomes" id="UP000001441">
    <property type="component" value="Chromosome"/>
</dbReference>
<dbReference type="GO" id="GO:0030077">
    <property type="term" value="C:plasma membrane light-harvesting complex"/>
    <property type="evidence" value="ECO:0007669"/>
    <property type="project" value="InterPro"/>
</dbReference>
<dbReference type="GO" id="GO:0042717">
    <property type="term" value="C:plasma membrane-derived chromatophore membrane"/>
    <property type="evidence" value="ECO:0007669"/>
    <property type="project" value="UniProtKB-SubCell"/>
</dbReference>
<dbReference type="GO" id="GO:0042314">
    <property type="term" value="F:bacteriochlorophyll binding"/>
    <property type="evidence" value="ECO:0007669"/>
    <property type="project" value="UniProtKB-KW"/>
</dbReference>
<dbReference type="GO" id="GO:0045156">
    <property type="term" value="F:electron transporter, transferring electrons within the cyclic electron transport pathway of photosynthesis activity"/>
    <property type="evidence" value="ECO:0007669"/>
    <property type="project" value="InterPro"/>
</dbReference>
<dbReference type="GO" id="GO:0046872">
    <property type="term" value="F:metal ion binding"/>
    <property type="evidence" value="ECO:0007669"/>
    <property type="project" value="UniProtKB-KW"/>
</dbReference>
<dbReference type="GO" id="GO:0009772">
    <property type="term" value="P:photosynthetic electron transport in photosystem II"/>
    <property type="evidence" value="ECO:0007669"/>
    <property type="project" value="InterPro"/>
</dbReference>
<dbReference type="CDD" id="cd09290">
    <property type="entry name" value="Photo-RC_L"/>
    <property type="match status" value="1"/>
</dbReference>
<dbReference type="Gene3D" id="1.20.85.10">
    <property type="entry name" value="Photosystem II protein D1-like"/>
    <property type="match status" value="2"/>
</dbReference>
<dbReference type="InterPro" id="IPR036854">
    <property type="entry name" value="Photo_II_D1/D2_sf"/>
</dbReference>
<dbReference type="InterPro" id="IPR005871">
    <property type="entry name" value="Photo_RC_L"/>
</dbReference>
<dbReference type="InterPro" id="IPR000484">
    <property type="entry name" value="Photo_RC_L/M"/>
</dbReference>
<dbReference type="InterPro" id="IPR055265">
    <property type="entry name" value="Photo_RC_L/M_CS"/>
</dbReference>
<dbReference type="NCBIfam" id="TIGR01157">
    <property type="entry name" value="pufL"/>
    <property type="match status" value="1"/>
</dbReference>
<dbReference type="Pfam" id="PF00124">
    <property type="entry name" value="Photo_RC"/>
    <property type="match status" value="1"/>
</dbReference>
<dbReference type="PRINTS" id="PR00256">
    <property type="entry name" value="REACTNCENTRE"/>
</dbReference>
<dbReference type="SUPFAM" id="SSF81483">
    <property type="entry name" value="Bacterial photosystem II reaction centre, L and M subunits"/>
    <property type="match status" value="1"/>
</dbReference>
<dbReference type="PROSITE" id="PS00244">
    <property type="entry name" value="REACTION_CENTER"/>
    <property type="match status" value="1"/>
</dbReference>
<name>RCEL_ALLVD</name>
<reference key="1">
    <citation type="submission" date="1998-03" db="EMBL/GenBank/DDBJ databases">
        <title>Primary structure of genes encoding light-harvesting and reaction center proteins from Chromatium vinosum.</title>
        <authorList>
            <person name="Corson G.E."/>
            <person name="Nagashima K.V."/>
            <person name="Matsuura K."/>
            <person name="Sakuragi Y."/>
            <person name="Ruwanthi W."/>
            <person name="Qin H."/>
            <person name="Allen R."/>
            <person name="Knaff D.B."/>
        </authorList>
    </citation>
    <scope>NUCLEOTIDE SEQUENCE [GENOMIC DNA]</scope>
</reference>
<reference key="2">
    <citation type="journal article" date="2011" name="Stand. Genomic Sci.">
        <title>Complete genome sequence of Allochromatium vinosum DSM 180(T).</title>
        <authorList>
            <person name="Weissgerber T."/>
            <person name="Zigann R."/>
            <person name="Bruce D."/>
            <person name="Chang Y.J."/>
            <person name="Detter J.C."/>
            <person name="Han C."/>
            <person name="Hauser L."/>
            <person name="Jeffries C.D."/>
            <person name="Land M."/>
            <person name="Munk A.C."/>
            <person name="Tapia R."/>
            <person name="Dahl C."/>
        </authorList>
    </citation>
    <scope>NUCLEOTIDE SEQUENCE [LARGE SCALE GENOMIC DNA]</scope>
    <source>
        <strain>ATCC 17899 / DSM 180 / NBRC 103801 / NCIMB 10441 / D</strain>
    </source>
</reference>
<reference key="3">
    <citation type="journal article" date="1997" name="J. Mol. Evol.">
        <title>Horizontal transfer of genes coding for the photosynthetic reaction centers of purple bacteria.</title>
        <authorList>
            <person name="Nagashima K.V."/>
            <person name="Hiraishi A."/>
            <person name="Shimada K."/>
            <person name="Matsuura K."/>
        </authorList>
    </citation>
    <scope>NUCLEOTIDE SEQUENCE [GENOMIC DNA] OF 22-278</scope>
</reference>
<gene>
    <name type="primary">pufL</name>
    <name type="ordered locus">Alvin_2553</name>
</gene>
<feature type="chain" id="PRO_0000090401" description="Reaction center protein L chain">
    <location>
        <begin position="1"/>
        <end position="278"/>
    </location>
</feature>
<feature type="transmembrane region" description="Helical" evidence="2">
    <location>
        <begin position="33"/>
        <end position="56"/>
    </location>
</feature>
<feature type="transmembrane region" description="Helical" evidence="2">
    <location>
        <begin position="90"/>
        <end position="118"/>
    </location>
</feature>
<feature type="transmembrane region" description="Helical" evidence="2">
    <location>
        <begin position="121"/>
        <end position="146"/>
    </location>
</feature>
<feature type="transmembrane region" description="Helical" evidence="2">
    <location>
        <begin position="176"/>
        <end position="205"/>
    </location>
</feature>
<feature type="transmembrane region" description="Helical" evidence="2">
    <location>
        <begin position="231"/>
        <end position="257"/>
    </location>
</feature>
<feature type="binding site" description="axial binding residue" evidence="1">
    <location>
        <position position="159"/>
    </location>
    <ligand>
        <name>(7R,8Z)-bacteriochlorophyll b</name>
        <dbReference type="ChEBI" id="CHEBI:30034"/>
    </ligand>
    <ligandPart>
        <name>Mg</name>
        <dbReference type="ChEBI" id="CHEBI:25107"/>
    </ligandPart>
</feature>
<feature type="binding site" description="axial binding residue" evidence="1">
    <location>
        <position position="179"/>
    </location>
    <ligand>
        <name>(7R,8Z)-bacteriochlorophyll b</name>
        <dbReference type="ChEBI" id="CHEBI:30034"/>
    </ligand>
    <ligandPart>
        <name>Mg</name>
        <dbReference type="ChEBI" id="CHEBI:25107"/>
    </ligandPart>
</feature>
<feature type="binding site" evidence="1">
    <location>
        <position position="196"/>
    </location>
    <ligand>
        <name>Fe cation</name>
        <dbReference type="ChEBI" id="CHEBI:24875"/>
    </ligand>
</feature>
<feature type="binding site" evidence="1">
    <location>
        <position position="222"/>
    </location>
    <ligand>
        <name>a ubiquinone</name>
        <dbReference type="ChEBI" id="CHEBI:16389"/>
    </ligand>
</feature>
<feature type="binding site" evidence="1">
    <location>
        <position position="236"/>
    </location>
    <ligand>
        <name>Fe cation</name>
        <dbReference type="ChEBI" id="CHEBI:24875"/>
    </ligand>
</feature>
<feature type="sequence conflict" description="In Ref. 3; BAA09314." evidence="3" ref="3">
    <original>G</original>
    <variation>V</variation>
    <location>
        <position position="46"/>
    </location>
</feature>
<feature type="sequence conflict" description="In Ref. 3; BAA09314." evidence="3" ref="3">
    <original>A</original>
    <variation>P</variation>
    <location>
        <position position="130"/>
    </location>
</feature>
<feature type="sequence conflict" description="In Ref. 3; BAA09314." evidence="3" ref="3">
    <original>H</original>
    <variation>N</variation>
    <location>
        <position position="172"/>
    </location>
</feature>
<feature type="sequence conflict" description="In Ref. 3; BAA09314." evidence="3" ref="3">
    <original>I</original>
    <variation>N</variation>
    <location>
        <position position="200"/>
    </location>
</feature>
<feature type="sequence conflict" description="In Ref. 3; BAA09314." evidence="3" ref="3">
    <original>E</original>
    <variation>N</variation>
    <location>
        <position position="274"/>
    </location>
</feature>
<feature type="turn" evidence="4">
    <location>
        <begin position="5"/>
        <end position="7"/>
    </location>
</feature>
<feature type="helix" evidence="4">
    <location>
        <begin position="8"/>
        <end position="10"/>
    </location>
</feature>
<feature type="strand" evidence="5">
    <location>
        <begin position="17"/>
        <end position="19"/>
    </location>
</feature>
<feature type="helix" evidence="4">
    <location>
        <begin position="33"/>
        <end position="56"/>
    </location>
</feature>
<feature type="turn" evidence="4">
    <location>
        <begin position="60"/>
        <end position="62"/>
    </location>
</feature>
<feature type="turn" evidence="4">
    <location>
        <begin position="67"/>
        <end position="69"/>
    </location>
</feature>
<feature type="helix" evidence="4">
    <location>
        <begin position="77"/>
        <end position="79"/>
    </location>
</feature>
<feature type="helix" evidence="4">
    <location>
        <begin position="86"/>
        <end position="88"/>
    </location>
</feature>
<feature type="helix" evidence="4">
    <location>
        <begin position="90"/>
        <end position="117"/>
    </location>
</feature>
<feature type="helix" evidence="4">
    <location>
        <begin position="122"/>
        <end position="138"/>
    </location>
</feature>
<feature type="helix" evidence="4">
    <location>
        <begin position="140"/>
        <end position="145"/>
    </location>
</feature>
<feature type="helix" evidence="4">
    <location>
        <begin position="148"/>
        <end position="150"/>
    </location>
</feature>
<feature type="helix" evidence="4">
    <location>
        <begin position="158"/>
        <end position="168"/>
    </location>
</feature>
<feature type="helix" evidence="4">
    <location>
        <begin position="173"/>
        <end position="175"/>
    </location>
</feature>
<feature type="helix" evidence="4">
    <location>
        <begin position="177"/>
        <end position="204"/>
    </location>
</feature>
<feature type="helix" evidence="4">
    <location>
        <begin position="215"/>
        <end position="226"/>
    </location>
</feature>
<feature type="helix" evidence="4">
    <location>
        <begin position="234"/>
        <end position="255"/>
    </location>
</feature>
<feature type="strand" evidence="4">
    <location>
        <begin position="256"/>
        <end position="260"/>
    </location>
</feature>
<feature type="helix" evidence="4">
    <location>
        <begin position="265"/>
        <end position="268"/>
    </location>
</feature>
<feature type="helix" evidence="4">
    <location>
        <begin position="270"/>
        <end position="273"/>
    </location>
</feature>